<keyword id="KW-0042">Antenna complex</keyword>
<keyword id="KW-0076">Bacteriochlorophyll</keyword>
<keyword id="KW-0997">Cell inner membrane</keyword>
<keyword id="KW-1003">Cell membrane</keyword>
<keyword id="KW-0148">Chlorophyll</keyword>
<keyword id="KW-0157">Chromophore</keyword>
<keyword id="KW-0903">Direct protein sequencing</keyword>
<keyword id="KW-0437">Light-harvesting polypeptide</keyword>
<keyword id="KW-0460">Magnesium</keyword>
<keyword id="KW-0472">Membrane</keyword>
<keyword id="KW-0479">Metal-binding</keyword>
<keyword id="KW-0812">Transmembrane</keyword>
<keyword id="KW-1133">Transmembrane helix</keyword>
<evidence type="ECO:0000250" key="1"/>
<evidence type="ECO:0000255" key="2"/>
<evidence type="ECO:0000269" key="3">
    <source>
    </source>
</evidence>
<evidence type="ECO:0000305" key="4"/>
<protein>
    <recommendedName>
        <fullName>Light-harvesting protein B-800/850 beta chain</fullName>
    </recommendedName>
    <alternativeName>
        <fullName>Antenna pigment protein beta chain</fullName>
    </alternativeName>
    <alternativeName>
        <fullName>LH2 beta polypeptide</fullName>
    </alternativeName>
</protein>
<feature type="initiator methionine" description="Removed" evidence="3">
    <location>
        <position position="1"/>
    </location>
</feature>
<feature type="chain" id="PRO_0000099825" description="Light-harvesting protein B-800/850 beta chain">
    <location>
        <begin position="2"/>
        <end position="51"/>
    </location>
</feature>
<feature type="topological domain" description="Cytoplasmic" evidence="2">
    <location>
        <begin position="2"/>
        <end position="23"/>
    </location>
</feature>
<feature type="transmembrane region" description="Helical" evidence="2">
    <location>
        <begin position="24"/>
        <end position="46"/>
    </location>
</feature>
<feature type="topological domain" description="Periplasmic" evidence="2">
    <location>
        <begin position="47"/>
        <end position="51"/>
    </location>
</feature>
<feature type="binding site" description="axial binding residue" evidence="2">
    <location>
        <position position="40"/>
    </location>
    <ligand>
        <name>a bacteriochlorophyll</name>
        <dbReference type="ChEBI" id="CHEBI:38201"/>
    </ligand>
    <ligandPart>
        <name>Mg</name>
        <dbReference type="ChEBI" id="CHEBI:25107"/>
    </ligandPart>
</feature>
<feature type="sequence variant" description="In strain: DSM 149.">
    <original>V</original>
    <variation>I</variation>
    <location>
        <position position="31"/>
    </location>
</feature>
<accession>P72281</accession>
<accession>P72283</accession>
<reference key="1">
    <citation type="submission" date="1996-08" db="EMBL/GenBank/DDBJ databases">
        <authorList>
            <person name="Simmons A.E."/>
        </authorList>
    </citation>
    <scope>NUCLEOTIDE SEQUENCE [GENOMIC DNA]</scope>
    <source>
        <strain>151</strain>
        <strain>DSM 149 / LMG 4308 / 2150</strain>
    </source>
</reference>
<reference key="2">
    <citation type="journal article" date="1995" name="J. Biol. Chem.">
        <title>Heterologous expression of genes encoding bacterial light-harvesting complexes in Rhodobacter sphaeroides.</title>
        <authorList>
            <person name="Fowler G.J."/>
            <person name="Gardiner A.T."/>
            <person name="Mackenzie R.C."/>
            <person name="Barratt S.J."/>
            <person name="Simmons A.E."/>
            <person name="Westerhuis W.H."/>
            <person name="Cogdell R.J."/>
            <person name="Hunter C.N."/>
        </authorList>
    </citation>
    <scope>NUCLEOTIDE SEQUENCE [GENOMIC DNA]</scope>
</reference>
<reference key="3">
    <citation type="journal article" date="2000" name="Photosyn. Res.">
        <title>Cloning, sequencing and analysis of the pucC gene from Rubrivivax gelatinosus strain 151 and Rhodopseudomonas acidophila strain 10050.</title>
        <authorList>
            <person name="Simmons A.E."/>
            <person name="Barrett S.J."/>
            <person name="Hunter C.N."/>
            <person name="Cogdell R.J."/>
        </authorList>
    </citation>
    <scope>NUCLEOTIDE SEQUENCE [GENOMIC DNA]</scope>
    <source>
        <strain>DSM 151 / LMG 4306 / Dr 2</strain>
    </source>
</reference>
<reference key="4">
    <citation type="journal article" date="1994" name="Eur. J. Biochem.">
        <title>Structural and spectral characterisation of the antenna complexes of Rhodocyclus gelatinosus. Indications of a hairpin-like-arranged antenna apoprotein with an unusually high alanine content.</title>
        <authorList>
            <person name="Brunisholz R.A."/>
            <person name="Suter F."/>
            <person name="Zuber H."/>
        </authorList>
    </citation>
    <scope>PROTEIN SEQUENCE OF 2-51</scope>
    <scope>SUBUNIT STRUCTURE</scope>
    <source>
        <strain>DSM 149 / LMG 4308 / 2150</strain>
        <strain>DSM 151 / LMG 4306 / Dr 2</strain>
    </source>
</reference>
<proteinExistence type="evidence at protein level"/>
<dbReference type="EMBL" id="U67154">
    <property type="protein sequence ID" value="AAB49630.1"/>
    <property type="molecule type" value="Genomic_DNA"/>
</dbReference>
<dbReference type="EMBL" id="U67155">
    <property type="protein sequence ID" value="AAB49633.1"/>
    <property type="molecule type" value="Genomic_DNA"/>
</dbReference>
<dbReference type="EMBL" id="AJ245615">
    <property type="protein sequence ID" value="CAB52410.1"/>
    <property type="molecule type" value="Genomic_DNA"/>
</dbReference>
<dbReference type="PIR" id="S66178">
    <property type="entry name" value="S66178"/>
</dbReference>
<dbReference type="SMR" id="P72281"/>
<dbReference type="OrthoDB" id="8910174at2"/>
<dbReference type="GO" id="GO:0005886">
    <property type="term" value="C:plasma membrane"/>
    <property type="evidence" value="ECO:0007669"/>
    <property type="project" value="UniProtKB-SubCell"/>
</dbReference>
<dbReference type="GO" id="GO:0030077">
    <property type="term" value="C:plasma membrane light-harvesting complex"/>
    <property type="evidence" value="ECO:0007669"/>
    <property type="project" value="InterPro"/>
</dbReference>
<dbReference type="GO" id="GO:0042314">
    <property type="term" value="F:bacteriochlorophyll binding"/>
    <property type="evidence" value="ECO:0007669"/>
    <property type="project" value="UniProtKB-KW"/>
</dbReference>
<dbReference type="GO" id="GO:0045156">
    <property type="term" value="F:electron transporter, transferring electrons within the cyclic electron transport pathway of photosynthesis activity"/>
    <property type="evidence" value="ECO:0007669"/>
    <property type="project" value="InterPro"/>
</dbReference>
<dbReference type="GO" id="GO:0046872">
    <property type="term" value="F:metal ion binding"/>
    <property type="evidence" value="ECO:0007669"/>
    <property type="project" value="UniProtKB-KW"/>
</dbReference>
<dbReference type="GO" id="GO:0019684">
    <property type="term" value="P:photosynthesis, light reaction"/>
    <property type="evidence" value="ECO:0007669"/>
    <property type="project" value="InterPro"/>
</dbReference>
<dbReference type="Gene3D" id="1.20.5.250">
    <property type="match status" value="1"/>
</dbReference>
<dbReference type="InterPro" id="IPR000066">
    <property type="entry name" value="Antenna_a/b"/>
</dbReference>
<dbReference type="InterPro" id="IPR023623">
    <property type="entry name" value="Antenna_beta_CS"/>
</dbReference>
<dbReference type="InterPro" id="IPR023624">
    <property type="entry name" value="Antenna_beta_dom_sf"/>
</dbReference>
<dbReference type="InterPro" id="IPR002362">
    <property type="entry name" value="LHB-1/5"/>
</dbReference>
<dbReference type="InterPro" id="IPR035889">
    <property type="entry name" value="Light-harvesting_complex"/>
</dbReference>
<dbReference type="NCBIfam" id="NF040862">
    <property type="entry name" value="pufB_517_ASD"/>
    <property type="match status" value="1"/>
</dbReference>
<dbReference type="Pfam" id="PF00556">
    <property type="entry name" value="LHC"/>
    <property type="match status" value="1"/>
</dbReference>
<dbReference type="PIRSF" id="PIRSF002900">
    <property type="entry name" value="Antenna_beta"/>
    <property type="match status" value="1"/>
</dbReference>
<dbReference type="PRINTS" id="PR00674">
    <property type="entry name" value="LIGHTHARVSTB"/>
</dbReference>
<dbReference type="SUPFAM" id="SSF56918">
    <property type="entry name" value="Light-harvesting complex subunits"/>
    <property type="match status" value="1"/>
</dbReference>
<dbReference type="PROSITE" id="PS00969">
    <property type="entry name" value="ANTENNA_COMP_BETA"/>
    <property type="match status" value="1"/>
</dbReference>
<comment type="function">
    <text>Antenna complexes are light-harvesting systems, which transfer the excitation energy to the reaction centers.</text>
</comment>
<comment type="subunit">
    <text evidence="1">An alpha/beta heterodimer conjugated to 3 bacteriochlorophyll molecules. The core complex is formed by different alpha and beta chains, binding bacteriochlorophyll molecules, and arranged most probably in tetrameric structures disposed around the reaction center. The non-pigmented gamma chains may constitute additional components (By similarity).</text>
</comment>
<comment type="subcellular location">
    <subcellularLocation>
        <location>Cell inner membrane</location>
        <topology>Single-pass type II membrane protein</topology>
    </subcellularLocation>
</comment>
<comment type="similarity">
    <text evidence="4">Belongs to the antenna complex beta subunit family.</text>
</comment>
<organism>
    <name type="scientific">Rubrivivax gelatinosus</name>
    <name type="common">Rhodocyclus gelatinosus</name>
    <name type="synonym">Rhodopseudomonas gelatinosa</name>
    <dbReference type="NCBI Taxonomy" id="28068"/>
    <lineage>
        <taxon>Bacteria</taxon>
        <taxon>Pseudomonadati</taxon>
        <taxon>Pseudomonadota</taxon>
        <taxon>Betaproteobacteria</taxon>
        <taxon>Burkholderiales</taxon>
        <taxon>Sphaerotilaceae</taxon>
        <taxon>Rubrivivax</taxon>
    </lineage>
</organism>
<name>LHB3_RUBGE</name>
<gene>
    <name type="primary">pucB</name>
</gene>
<sequence>MADDANKVWPSGLTTAEAEELQKGLVDGTRVFGVIAVLAHILAYAYTPWLH</sequence>